<protein>
    <recommendedName>
        <fullName evidence="1">Ribonuclease P protein component</fullName>
        <shortName evidence="1">RNase P protein</shortName>
        <shortName evidence="1">RNaseP protein</shortName>
        <ecNumber evidence="1">3.1.26.5</ecNumber>
    </recommendedName>
    <alternativeName>
        <fullName evidence="1">Protein C5</fullName>
    </alternativeName>
</protein>
<dbReference type="EC" id="3.1.26.5" evidence="1"/>
<dbReference type="EMBL" id="CP001233">
    <property type="protein sequence ID" value="ACP04343.1"/>
    <property type="molecule type" value="Genomic_DNA"/>
</dbReference>
<dbReference type="SMR" id="C3LP79"/>
<dbReference type="KEGG" id="vcm:VCM66_0006"/>
<dbReference type="HOGENOM" id="CLU_117179_11_0_6"/>
<dbReference type="Proteomes" id="UP000001217">
    <property type="component" value="Chromosome I"/>
</dbReference>
<dbReference type="GO" id="GO:0030677">
    <property type="term" value="C:ribonuclease P complex"/>
    <property type="evidence" value="ECO:0007669"/>
    <property type="project" value="TreeGrafter"/>
</dbReference>
<dbReference type="GO" id="GO:0042781">
    <property type="term" value="F:3'-tRNA processing endoribonuclease activity"/>
    <property type="evidence" value="ECO:0007669"/>
    <property type="project" value="TreeGrafter"/>
</dbReference>
<dbReference type="GO" id="GO:0004526">
    <property type="term" value="F:ribonuclease P activity"/>
    <property type="evidence" value="ECO:0007669"/>
    <property type="project" value="UniProtKB-UniRule"/>
</dbReference>
<dbReference type="GO" id="GO:0000049">
    <property type="term" value="F:tRNA binding"/>
    <property type="evidence" value="ECO:0007669"/>
    <property type="project" value="UniProtKB-UniRule"/>
</dbReference>
<dbReference type="GO" id="GO:0001682">
    <property type="term" value="P:tRNA 5'-leader removal"/>
    <property type="evidence" value="ECO:0007669"/>
    <property type="project" value="UniProtKB-UniRule"/>
</dbReference>
<dbReference type="FunFam" id="3.30.230.10:FF:000016">
    <property type="entry name" value="Ribonuclease P protein component"/>
    <property type="match status" value="1"/>
</dbReference>
<dbReference type="Gene3D" id="3.30.230.10">
    <property type="match status" value="1"/>
</dbReference>
<dbReference type="HAMAP" id="MF_00227">
    <property type="entry name" value="RNase_P"/>
    <property type="match status" value="1"/>
</dbReference>
<dbReference type="InterPro" id="IPR020568">
    <property type="entry name" value="Ribosomal_Su5_D2-typ_SF"/>
</dbReference>
<dbReference type="InterPro" id="IPR014721">
    <property type="entry name" value="Ribsml_uS5_D2-typ_fold_subgr"/>
</dbReference>
<dbReference type="InterPro" id="IPR000100">
    <property type="entry name" value="RNase_P"/>
</dbReference>
<dbReference type="NCBIfam" id="TIGR00188">
    <property type="entry name" value="rnpA"/>
    <property type="match status" value="1"/>
</dbReference>
<dbReference type="PANTHER" id="PTHR33992">
    <property type="entry name" value="RIBONUCLEASE P PROTEIN COMPONENT"/>
    <property type="match status" value="1"/>
</dbReference>
<dbReference type="PANTHER" id="PTHR33992:SF1">
    <property type="entry name" value="RIBONUCLEASE P PROTEIN COMPONENT"/>
    <property type="match status" value="1"/>
</dbReference>
<dbReference type="Pfam" id="PF00825">
    <property type="entry name" value="Ribonuclease_P"/>
    <property type="match status" value="1"/>
</dbReference>
<dbReference type="SUPFAM" id="SSF54211">
    <property type="entry name" value="Ribosomal protein S5 domain 2-like"/>
    <property type="match status" value="1"/>
</dbReference>
<accession>C3LP79</accession>
<gene>
    <name evidence="1" type="primary">rnpA</name>
    <name type="ordered locus">VCM66_0006</name>
</gene>
<organism>
    <name type="scientific">Vibrio cholerae serotype O1 (strain M66-2)</name>
    <dbReference type="NCBI Taxonomy" id="579112"/>
    <lineage>
        <taxon>Bacteria</taxon>
        <taxon>Pseudomonadati</taxon>
        <taxon>Pseudomonadota</taxon>
        <taxon>Gammaproteobacteria</taxon>
        <taxon>Vibrionales</taxon>
        <taxon>Vibrionaceae</taxon>
        <taxon>Vibrio</taxon>
    </lineage>
</organism>
<feature type="chain" id="PRO_1000194683" description="Ribonuclease P protein component">
    <location>
        <begin position="1"/>
        <end position="118"/>
    </location>
</feature>
<proteinExistence type="inferred from homology"/>
<name>RNPA_VIBCM</name>
<sequence>MSTYAFNRELRLLTPEHYQKVFQQAHSAGSPHLTIIARANNLSHPRLGLAVPKKQIKTAVGRNRFKRICRESFRLHQNQLANKDFVVIAKKSAQDLSNEELFNLLGKLWQRLSRPSRG</sequence>
<keyword id="KW-0255">Endonuclease</keyword>
<keyword id="KW-0378">Hydrolase</keyword>
<keyword id="KW-0540">Nuclease</keyword>
<keyword id="KW-0694">RNA-binding</keyword>
<keyword id="KW-0819">tRNA processing</keyword>
<comment type="function">
    <text evidence="1">RNaseP catalyzes the removal of the 5'-leader sequence from pre-tRNA to produce the mature 5'-terminus. It can also cleave other RNA substrates such as 4.5S RNA. The protein component plays an auxiliary but essential role in vivo by binding to the 5'-leader sequence and broadening the substrate specificity of the ribozyme.</text>
</comment>
<comment type="catalytic activity">
    <reaction evidence="1">
        <text>Endonucleolytic cleavage of RNA, removing 5'-extranucleotides from tRNA precursor.</text>
        <dbReference type="EC" id="3.1.26.5"/>
    </reaction>
</comment>
<comment type="subunit">
    <text evidence="1">Consists of a catalytic RNA component (M1 or rnpB) and a protein subunit.</text>
</comment>
<comment type="similarity">
    <text evidence="1">Belongs to the RnpA family.</text>
</comment>
<evidence type="ECO:0000255" key="1">
    <source>
        <dbReference type="HAMAP-Rule" id="MF_00227"/>
    </source>
</evidence>
<reference key="1">
    <citation type="journal article" date="2008" name="PLoS ONE">
        <title>A recalibrated molecular clock and independent origins for the cholera pandemic clones.</title>
        <authorList>
            <person name="Feng L."/>
            <person name="Reeves P.R."/>
            <person name="Lan R."/>
            <person name="Ren Y."/>
            <person name="Gao C."/>
            <person name="Zhou Z."/>
            <person name="Ren Y."/>
            <person name="Cheng J."/>
            <person name="Wang W."/>
            <person name="Wang J."/>
            <person name="Qian W."/>
            <person name="Li D."/>
            <person name="Wang L."/>
        </authorList>
    </citation>
    <scope>NUCLEOTIDE SEQUENCE [LARGE SCALE GENOMIC DNA]</scope>
    <source>
        <strain>M66-2</strain>
    </source>
</reference>